<feature type="chain" id="PRO_0000086355" description="Serine/threonine-protein kinase mos">
    <location>
        <begin position="1" status="less than"/>
        <end position="200" status="greater than"/>
    </location>
</feature>
<feature type="domain" description="Protein kinase" evidence="1">
    <location>
        <begin position="2"/>
        <end position="200" status="greater than"/>
    </location>
</feature>
<feature type="active site" description="Proton acceptor" evidence="1 2">
    <location>
        <position position="143"/>
    </location>
</feature>
<feature type="binding site" evidence="1">
    <location>
        <begin position="8"/>
        <end position="16"/>
    </location>
    <ligand>
        <name>ATP</name>
        <dbReference type="ChEBI" id="CHEBI:30616"/>
    </ligand>
</feature>
<feature type="binding site" evidence="1">
    <location>
        <position position="29"/>
    </location>
    <ligand>
        <name>ATP</name>
        <dbReference type="ChEBI" id="CHEBI:30616"/>
    </ligand>
</feature>
<feature type="non-terminal residue">
    <location>
        <position position="1"/>
    </location>
</feature>
<feature type="non-terminal residue">
    <location>
        <position position="200"/>
    </location>
</feature>
<name>MOS_NYCNY</name>
<protein>
    <recommendedName>
        <fullName>Serine/threonine-protein kinase mos</fullName>
        <ecNumber>2.7.11.1</ecNumber>
    </recommendedName>
    <alternativeName>
        <fullName>Oocyte maturation factor mos</fullName>
    </alternativeName>
</protein>
<keyword id="KW-0067">ATP-binding</keyword>
<keyword id="KW-0418">Kinase</keyword>
<keyword id="KW-0547">Nucleotide-binding</keyword>
<keyword id="KW-0723">Serine/threonine-protein kinase</keyword>
<keyword id="KW-0808">Transferase</keyword>
<gene>
    <name type="primary">MOS</name>
</gene>
<reference key="1">
    <citation type="journal article" date="2001" name="Proc. R. Soc. B">
        <title>Convergence and divergence in the evolution of aquatic birds.</title>
        <authorList>
            <person name="van Tuinen M."/>
            <person name="Butvill D.B."/>
            <person name="Kirsch J.A."/>
            <person name="Hedges S.B."/>
        </authorList>
    </citation>
    <scope>NUCLEOTIDE SEQUENCE [GENOMIC DNA]</scope>
</reference>
<dbReference type="EC" id="2.7.11.1"/>
<dbReference type="EMBL" id="AF339327">
    <property type="protein sequence ID" value="AAL06303.1"/>
    <property type="molecule type" value="Genomic_DNA"/>
</dbReference>
<dbReference type="SMR" id="Q90XV9"/>
<dbReference type="GO" id="GO:0005524">
    <property type="term" value="F:ATP binding"/>
    <property type="evidence" value="ECO:0007669"/>
    <property type="project" value="UniProtKB-KW"/>
</dbReference>
<dbReference type="GO" id="GO:0106310">
    <property type="term" value="F:protein serine kinase activity"/>
    <property type="evidence" value="ECO:0007669"/>
    <property type="project" value="RHEA"/>
</dbReference>
<dbReference type="GO" id="GO:0004674">
    <property type="term" value="F:protein serine/threonine kinase activity"/>
    <property type="evidence" value="ECO:0007669"/>
    <property type="project" value="UniProtKB-KW"/>
</dbReference>
<dbReference type="FunFam" id="3.30.200.20:FF:000316">
    <property type="entry name" value="Proto-oncogene serine/threonine-protein kinase mos"/>
    <property type="match status" value="1"/>
</dbReference>
<dbReference type="Gene3D" id="3.30.200.20">
    <property type="entry name" value="Phosphorylase Kinase, domain 1"/>
    <property type="match status" value="1"/>
</dbReference>
<dbReference type="Gene3D" id="1.10.510.10">
    <property type="entry name" value="Transferase(Phosphotransferase) domain 1"/>
    <property type="match status" value="1"/>
</dbReference>
<dbReference type="InterPro" id="IPR011009">
    <property type="entry name" value="Kinase-like_dom_sf"/>
</dbReference>
<dbReference type="InterPro" id="IPR000719">
    <property type="entry name" value="Prot_kinase_dom"/>
</dbReference>
<dbReference type="InterPro" id="IPR017441">
    <property type="entry name" value="Protein_kinase_ATP_BS"/>
</dbReference>
<dbReference type="InterPro" id="IPR008271">
    <property type="entry name" value="Ser/Thr_kinase_AS"/>
</dbReference>
<dbReference type="InterPro" id="IPR051681">
    <property type="entry name" value="Ser/Thr_Kinases-Pseudokinases"/>
</dbReference>
<dbReference type="PANTHER" id="PTHR44329">
    <property type="entry name" value="SERINE/THREONINE-PROTEIN KINASE TNNI3K-RELATED"/>
    <property type="match status" value="1"/>
</dbReference>
<dbReference type="PANTHER" id="PTHR44329:SF285">
    <property type="entry name" value="V-MOS MOLONEY MURINE SARCOMA VIRAL ONCO HOMOLOG"/>
    <property type="match status" value="1"/>
</dbReference>
<dbReference type="Pfam" id="PF00069">
    <property type="entry name" value="Pkinase"/>
    <property type="match status" value="1"/>
</dbReference>
<dbReference type="SMART" id="SM00220">
    <property type="entry name" value="S_TKc"/>
    <property type="match status" value="1"/>
</dbReference>
<dbReference type="SUPFAM" id="SSF56112">
    <property type="entry name" value="Protein kinase-like (PK-like)"/>
    <property type="match status" value="1"/>
</dbReference>
<dbReference type="PROSITE" id="PS00107">
    <property type="entry name" value="PROTEIN_KINASE_ATP"/>
    <property type="match status" value="1"/>
</dbReference>
<dbReference type="PROSITE" id="PS50011">
    <property type="entry name" value="PROTEIN_KINASE_DOM"/>
    <property type="match status" value="1"/>
</dbReference>
<dbReference type="PROSITE" id="PS00108">
    <property type="entry name" value="PROTEIN_KINASE_ST"/>
    <property type="match status" value="1"/>
</dbReference>
<accession>Q90XV9</accession>
<comment type="catalytic activity">
    <reaction>
        <text>L-seryl-[protein] + ATP = O-phospho-L-seryl-[protein] + ADP + H(+)</text>
        <dbReference type="Rhea" id="RHEA:17989"/>
        <dbReference type="Rhea" id="RHEA-COMP:9863"/>
        <dbReference type="Rhea" id="RHEA-COMP:11604"/>
        <dbReference type="ChEBI" id="CHEBI:15378"/>
        <dbReference type="ChEBI" id="CHEBI:29999"/>
        <dbReference type="ChEBI" id="CHEBI:30616"/>
        <dbReference type="ChEBI" id="CHEBI:83421"/>
        <dbReference type="ChEBI" id="CHEBI:456216"/>
        <dbReference type="EC" id="2.7.11.1"/>
    </reaction>
</comment>
<comment type="catalytic activity">
    <reaction>
        <text>L-threonyl-[protein] + ATP = O-phospho-L-threonyl-[protein] + ADP + H(+)</text>
        <dbReference type="Rhea" id="RHEA:46608"/>
        <dbReference type="Rhea" id="RHEA-COMP:11060"/>
        <dbReference type="Rhea" id="RHEA-COMP:11605"/>
        <dbReference type="ChEBI" id="CHEBI:15378"/>
        <dbReference type="ChEBI" id="CHEBI:30013"/>
        <dbReference type="ChEBI" id="CHEBI:30616"/>
        <dbReference type="ChEBI" id="CHEBI:61977"/>
        <dbReference type="ChEBI" id="CHEBI:456216"/>
        <dbReference type="EC" id="2.7.11.1"/>
    </reaction>
</comment>
<comment type="similarity">
    <text evidence="1">Belongs to the protein kinase superfamily. Ser/Thr protein kinase family.</text>
</comment>
<proteinExistence type="inferred from homology"/>
<organism>
    <name type="scientific">Nycticorax nycticorax</name>
    <name type="common">Black-crowned night-heron</name>
    <name type="synonym">Ardea nycticorax</name>
    <dbReference type="NCBI Taxonomy" id="8901"/>
    <lineage>
        <taxon>Eukaryota</taxon>
        <taxon>Metazoa</taxon>
        <taxon>Chordata</taxon>
        <taxon>Craniata</taxon>
        <taxon>Vertebrata</taxon>
        <taxon>Euteleostomi</taxon>
        <taxon>Archelosauria</taxon>
        <taxon>Archosauria</taxon>
        <taxon>Dinosauria</taxon>
        <taxon>Saurischia</taxon>
        <taxon>Theropoda</taxon>
        <taxon>Coelurosauria</taxon>
        <taxon>Aves</taxon>
        <taxon>Neognathae</taxon>
        <taxon>Neoaves</taxon>
        <taxon>Aequornithes</taxon>
        <taxon>Pelecaniformes</taxon>
        <taxon>Ardeidae</taxon>
        <taxon>Nycticorax</taxon>
    </lineage>
</organism>
<evidence type="ECO:0000255" key="1">
    <source>
        <dbReference type="PROSITE-ProRule" id="PRU00159"/>
    </source>
</evidence>
<evidence type="ECO:0000255" key="2">
    <source>
        <dbReference type="PROSITE-ProRule" id="PRU10027"/>
    </source>
</evidence>
<sequence>QLCLLQPLGSGGFGSVYKATYHGATVAVKQVKKSSKNRLASRQSFWAELNVAWLQHDNVVRVVAASTCAPASQNSLGTIIMEYVGNITLHHVIYGTGDVWRQGEDDEGGCGRLALSMEETVCYSCDIMTGLAFLHSQGIVHLDLKPANVFITEQGVCKIGDFGCSQKLEEGLSQSLHVCQQGGTYTHRAPELLKGERVTA</sequence>